<dbReference type="EMBL" id="CP000849">
    <property type="protein sequence ID" value="ABV79328.1"/>
    <property type="molecule type" value="Genomic_DNA"/>
</dbReference>
<dbReference type="RefSeq" id="WP_011477440.1">
    <property type="nucleotide sequence ID" value="NC_009883.1"/>
</dbReference>
<dbReference type="SMR" id="A8GWV1"/>
<dbReference type="KEGG" id="rbo:A1I_04975"/>
<dbReference type="HOGENOM" id="CLU_148518_0_0_5"/>
<dbReference type="GO" id="GO:0022627">
    <property type="term" value="C:cytosolic small ribosomal subunit"/>
    <property type="evidence" value="ECO:0007669"/>
    <property type="project" value="TreeGrafter"/>
</dbReference>
<dbReference type="GO" id="GO:0019843">
    <property type="term" value="F:rRNA binding"/>
    <property type="evidence" value="ECO:0007669"/>
    <property type="project" value="UniProtKB-UniRule"/>
</dbReference>
<dbReference type="GO" id="GO:0003735">
    <property type="term" value="F:structural constituent of ribosome"/>
    <property type="evidence" value="ECO:0007669"/>
    <property type="project" value="InterPro"/>
</dbReference>
<dbReference type="GO" id="GO:0006412">
    <property type="term" value="P:translation"/>
    <property type="evidence" value="ECO:0007669"/>
    <property type="project" value="UniProtKB-UniRule"/>
</dbReference>
<dbReference type="CDD" id="cd00353">
    <property type="entry name" value="Ribosomal_S15p_S13e"/>
    <property type="match status" value="1"/>
</dbReference>
<dbReference type="FunFam" id="1.10.287.10:FF:000002">
    <property type="entry name" value="30S ribosomal protein S15"/>
    <property type="match status" value="1"/>
</dbReference>
<dbReference type="Gene3D" id="6.10.250.3130">
    <property type="match status" value="1"/>
</dbReference>
<dbReference type="Gene3D" id="1.10.287.10">
    <property type="entry name" value="S15/NS1, RNA-binding"/>
    <property type="match status" value="1"/>
</dbReference>
<dbReference type="HAMAP" id="MF_01343_B">
    <property type="entry name" value="Ribosomal_uS15_B"/>
    <property type="match status" value="1"/>
</dbReference>
<dbReference type="InterPro" id="IPR000589">
    <property type="entry name" value="Ribosomal_uS15"/>
</dbReference>
<dbReference type="InterPro" id="IPR005290">
    <property type="entry name" value="Ribosomal_uS15_bac-type"/>
</dbReference>
<dbReference type="InterPro" id="IPR009068">
    <property type="entry name" value="uS15_NS1_RNA-bd_sf"/>
</dbReference>
<dbReference type="NCBIfam" id="TIGR00952">
    <property type="entry name" value="S15_bact"/>
    <property type="match status" value="1"/>
</dbReference>
<dbReference type="PANTHER" id="PTHR23321">
    <property type="entry name" value="RIBOSOMAL PROTEIN S15, BACTERIAL AND ORGANELLAR"/>
    <property type="match status" value="1"/>
</dbReference>
<dbReference type="PANTHER" id="PTHR23321:SF26">
    <property type="entry name" value="SMALL RIBOSOMAL SUBUNIT PROTEIN US15M"/>
    <property type="match status" value="1"/>
</dbReference>
<dbReference type="Pfam" id="PF00312">
    <property type="entry name" value="Ribosomal_S15"/>
    <property type="match status" value="1"/>
</dbReference>
<dbReference type="SMART" id="SM01387">
    <property type="entry name" value="Ribosomal_S15"/>
    <property type="match status" value="1"/>
</dbReference>
<dbReference type="SUPFAM" id="SSF47060">
    <property type="entry name" value="S15/NS1 RNA-binding domain"/>
    <property type="match status" value="1"/>
</dbReference>
<dbReference type="PROSITE" id="PS00362">
    <property type="entry name" value="RIBOSOMAL_S15"/>
    <property type="match status" value="1"/>
</dbReference>
<gene>
    <name evidence="1" type="primary">rpsO</name>
    <name type="ordered locus">A1I_04975</name>
</gene>
<keyword id="KW-0687">Ribonucleoprotein</keyword>
<keyword id="KW-0689">Ribosomal protein</keyword>
<keyword id="KW-0694">RNA-binding</keyword>
<keyword id="KW-0699">rRNA-binding</keyword>
<organism>
    <name type="scientific">Rickettsia bellii (strain OSU 85-389)</name>
    <dbReference type="NCBI Taxonomy" id="391896"/>
    <lineage>
        <taxon>Bacteria</taxon>
        <taxon>Pseudomonadati</taxon>
        <taxon>Pseudomonadota</taxon>
        <taxon>Alphaproteobacteria</taxon>
        <taxon>Rickettsiales</taxon>
        <taxon>Rickettsiaceae</taxon>
        <taxon>Rickettsieae</taxon>
        <taxon>Rickettsia</taxon>
        <taxon>belli group</taxon>
    </lineage>
</organism>
<reference key="1">
    <citation type="submission" date="2007-09" db="EMBL/GenBank/DDBJ databases">
        <title>Complete genome sequencing of Rickettsia bellii.</title>
        <authorList>
            <person name="Madan A."/>
            <person name="Lee H."/>
            <person name="Madan A."/>
            <person name="Yoon J.-G."/>
            <person name="Ryu G.-Y."/>
            <person name="Dasch G."/>
            <person name="Ereemeva M."/>
        </authorList>
    </citation>
    <scope>NUCLEOTIDE SEQUENCE [LARGE SCALE GENOMIC DNA]</scope>
    <source>
        <strain>OSU 85-389</strain>
    </source>
</reference>
<proteinExistence type="inferred from homology"/>
<name>RS15_RICB8</name>
<protein>
    <recommendedName>
        <fullName evidence="1">Small ribosomal subunit protein uS15</fullName>
    </recommendedName>
    <alternativeName>
        <fullName evidence="2">30S ribosomal protein S15</fullName>
    </alternativeName>
</protein>
<comment type="function">
    <text evidence="1">One of the primary rRNA binding proteins, it binds directly to 16S rRNA where it helps nucleate assembly of the platform of the 30S subunit by binding and bridging several RNA helices of the 16S rRNA.</text>
</comment>
<comment type="function">
    <text evidence="1">Forms an intersubunit bridge (bridge B4) with the 23S rRNA of the 50S subunit in the ribosome.</text>
</comment>
<comment type="subunit">
    <text evidence="1">Part of the 30S ribosomal subunit. Forms a bridge to the 50S subunit in the 70S ribosome, contacting the 23S rRNA.</text>
</comment>
<comment type="similarity">
    <text evidence="1">Belongs to the universal ribosomal protein uS15 family.</text>
</comment>
<accession>A8GWV1</accession>
<evidence type="ECO:0000255" key="1">
    <source>
        <dbReference type="HAMAP-Rule" id="MF_01343"/>
    </source>
</evidence>
<evidence type="ECO:0000305" key="2"/>
<sequence length="91" mass="10621">MSITQERKQELIKNYAINDNDTGSSAVQCAILTERINNLTEHFKSNHKDHTSRRGLLILVGRRRRLLNYIKKKNVSEYLDLISKLGIRKIK</sequence>
<feature type="chain" id="PRO_1000054859" description="Small ribosomal subunit protein uS15">
    <location>
        <begin position="1"/>
        <end position="91"/>
    </location>
</feature>